<geneLocation type="chloroplast"/>
<accession>Q85WZ7</accession>
<comment type="function">
    <text evidence="1">One of the essential components for the initiation of protein synthesis. Stabilizes the binding of IF-2 and IF-3 on the 30S subunit to which N-formylmethionyl-tRNA(fMet) subsequently binds. Helps modulate mRNA selection, yielding the 30S pre-initiation complex (PIC). Upon addition of the 50S ribosomal subunit IF-1, IF-2 and IF-3 are released leaving the mature 70S translation initiation complex.</text>
</comment>
<comment type="subunit">
    <text evidence="1">Component of the 30S ribosomal translation pre-initiation complex which assembles on the 30S ribosome in the order IF-2 and IF-3, IF-1 and N-formylmethionyl-tRNA(fMet); mRNA recruitment can occur at any time during PIC assembly.</text>
</comment>
<comment type="subcellular location">
    <subcellularLocation>
        <location evidence="1">Plastid</location>
        <location evidence="1">Chloroplast</location>
    </subcellularLocation>
</comment>
<comment type="similarity">
    <text evidence="1">Belongs to the IF-1 family.</text>
</comment>
<name>IF1C_PINKO</name>
<dbReference type="EMBL" id="AY228468">
    <property type="protein sequence ID" value="AAO74071.1"/>
    <property type="molecule type" value="Genomic_DNA"/>
</dbReference>
<dbReference type="RefSeq" id="NP_817223.1">
    <property type="nucleotide sequence ID" value="NC_004677.2"/>
</dbReference>
<dbReference type="SMR" id="Q85WZ7"/>
<dbReference type="GeneID" id="806969"/>
<dbReference type="GO" id="GO:0009507">
    <property type="term" value="C:chloroplast"/>
    <property type="evidence" value="ECO:0007669"/>
    <property type="project" value="UniProtKB-SubCell"/>
</dbReference>
<dbReference type="GO" id="GO:0005829">
    <property type="term" value="C:cytosol"/>
    <property type="evidence" value="ECO:0007669"/>
    <property type="project" value="TreeGrafter"/>
</dbReference>
<dbReference type="GO" id="GO:0043022">
    <property type="term" value="F:ribosome binding"/>
    <property type="evidence" value="ECO:0007669"/>
    <property type="project" value="UniProtKB-UniRule"/>
</dbReference>
<dbReference type="GO" id="GO:0019843">
    <property type="term" value="F:rRNA binding"/>
    <property type="evidence" value="ECO:0007669"/>
    <property type="project" value="UniProtKB-UniRule"/>
</dbReference>
<dbReference type="GO" id="GO:0003743">
    <property type="term" value="F:translation initiation factor activity"/>
    <property type="evidence" value="ECO:0007669"/>
    <property type="project" value="UniProtKB-UniRule"/>
</dbReference>
<dbReference type="CDD" id="cd04451">
    <property type="entry name" value="S1_IF1"/>
    <property type="match status" value="1"/>
</dbReference>
<dbReference type="FunFam" id="2.40.50.140:FF:000002">
    <property type="entry name" value="Translation initiation factor IF-1"/>
    <property type="match status" value="1"/>
</dbReference>
<dbReference type="Gene3D" id="2.40.50.140">
    <property type="entry name" value="Nucleic acid-binding proteins"/>
    <property type="match status" value="1"/>
</dbReference>
<dbReference type="HAMAP" id="MF_00075">
    <property type="entry name" value="IF_1"/>
    <property type="match status" value="1"/>
</dbReference>
<dbReference type="InterPro" id="IPR012340">
    <property type="entry name" value="NA-bd_OB-fold"/>
</dbReference>
<dbReference type="InterPro" id="IPR006196">
    <property type="entry name" value="RNA-binding_domain_S1_IF1"/>
</dbReference>
<dbReference type="InterPro" id="IPR004368">
    <property type="entry name" value="TIF_IF1"/>
</dbReference>
<dbReference type="NCBIfam" id="TIGR00008">
    <property type="entry name" value="infA"/>
    <property type="match status" value="1"/>
</dbReference>
<dbReference type="PANTHER" id="PTHR33370">
    <property type="entry name" value="TRANSLATION INITIATION FACTOR IF-1, CHLOROPLASTIC"/>
    <property type="match status" value="1"/>
</dbReference>
<dbReference type="PANTHER" id="PTHR33370:SF1">
    <property type="entry name" value="TRANSLATION INITIATION FACTOR IF-1, CHLOROPLASTIC"/>
    <property type="match status" value="1"/>
</dbReference>
<dbReference type="Pfam" id="PF01176">
    <property type="entry name" value="eIF-1a"/>
    <property type="match status" value="1"/>
</dbReference>
<dbReference type="SUPFAM" id="SSF50249">
    <property type="entry name" value="Nucleic acid-binding proteins"/>
    <property type="match status" value="1"/>
</dbReference>
<dbReference type="PROSITE" id="PS50832">
    <property type="entry name" value="S1_IF1_TYPE"/>
    <property type="match status" value="1"/>
</dbReference>
<organism>
    <name type="scientific">Pinus koraiensis</name>
    <name type="common">Korean pine</name>
    <dbReference type="NCBI Taxonomy" id="88728"/>
    <lineage>
        <taxon>Eukaryota</taxon>
        <taxon>Viridiplantae</taxon>
        <taxon>Streptophyta</taxon>
        <taxon>Embryophyta</taxon>
        <taxon>Tracheophyta</taxon>
        <taxon>Spermatophyta</taxon>
        <taxon>Pinopsida</taxon>
        <taxon>Pinidae</taxon>
        <taxon>Conifers I</taxon>
        <taxon>Pinales</taxon>
        <taxon>Pinaceae</taxon>
        <taxon>Pinus</taxon>
        <taxon>Pinus subgen. Strobus</taxon>
    </lineage>
</organism>
<proteinExistence type="inferred from homology"/>
<evidence type="ECO:0000255" key="1">
    <source>
        <dbReference type="HAMAP-Rule" id="MF_00075"/>
    </source>
</evidence>
<reference key="1">
    <citation type="submission" date="2003-02" db="EMBL/GenBank/DDBJ databases">
        <title>Complete nucleotide sequence of Pinus koraiensis.</title>
        <authorList>
            <person name="Noh E.W."/>
            <person name="Lee J.S."/>
            <person name="Choi Y.I."/>
            <person name="Han M.S."/>
            <person name="Yi Y.S."/>
            <person name="Han S.U."/>
        </authorList>
    </citation>
    <scope>NUCLEOTIDE SEQUENCE [LARGE SCALE GENOMIC DNA]</scope>
    <source>
        <strain>KangWon16</strain>
    </source>
</reference>
<gene>
    <name evidence="1" type="primary">infA</name>
</gene>
<feature type="chain" id="PRO_0000095946" description="Translation initiation factor IF-1, chloroplastic">
    <location>
        <begin position="1"/>
        <end position="75"/>
    </location>
</feature>
<feature type="domain" description="S1-like" evidence="1">
    <location>
        <begin position="1"/>
        <end position="72"/>
    </location>
</feature>
<keyword id="KW-0150">Chloroplast</keyword>
<keyword id="KW-0396">Initiation factor</keyword>
<keyword id="KW-0934">Plastid</keyword>
<keyword id="KW-0648">Protein biosynthesis</keyword>
<keyword id="KW-0694">RNA-binding</keyword>
<keyword id="KW-0699">rRNA-binding</keyword>
<sequence>MKKQNLIHAEGLVTESLPNGMFRVLTDNGCQILTHISGRIRRNSVRILPGDRVKVELSAYDLTKGRIIYRLSNKS</sequence>
<protein>
    <recommendedName>
        <fullName evidence="1">Translation initiation factor IF-1, chloroplastic</fullName>
    </recommendedName>
</protein>